<comment type="function">
    <text evidence="1">The RecF protein is involved in DNA metabolism; it is required for DNA replication and normal SOS inducibility. RecF binds preferentially to single-stranded, linear DNA. It also seems to bind ATP.</text>
</comment>
<comment type="subcellular location">
    <subcellularLocation>
        <location evidence="1">Cytoplasm</location>
    </subcellularLocation>
</comment>
<comment type="similarity">
    <text evidence="1">Belongs to the RecF family.</text>
</comment>
<keyword id="KW-0067">ATP-binding</keyword>
<keyword id="KW-0963">Cytoplasm</keyword>
<keyword id="KW-0227">DNA damage</keyword>
<keyword id="KW-0234">DNA repair</keyword>
<keyword id="KW-0235">DNA replication</keyword>
<keyword id="KW-0238">DNA-binding</keyword>
<keyword id="KW-0547">Nucleotide-binding</keyword>
<keyword id="KW-1185">Reference proteome</keyword>
<keyword id="KW-0742">SOS response</keyword>
<evidence type="ECO:0000255" key="1">
    <source>
        <dbReference type="HAMAP-Rule" id="MF_00365"/>
    </source>
</evidence>
<sequence>MIVESVELKDFRNYEFLDMNFNEHVNIIYGDNAQGKTNILESIYMCSTSKSHRGSKDREIVRFGEDESHIKLNVLKHGMKYRIDMHLKKNKTKGIAVNGIPIKKAVELFGIINIVFFSPEDLNIIKNGPSERRRFMDMELSQLDKIYLSNLVNYNKVLNQRNKLLKDIAFSPSEQLMQTLDIWDMQLVKYGSLIIKGRKSFIEKINTIISDIHSRLTGGIENIKVCYVPDVDVNDFEEEVRNSRQKDIKYKVTGKGPHKDDLIFLINDNDVRKYGSQGQQRTAALSLKLSEIELVKLVIKDTPVLLLDDVLSELDSNRQNFLINSIGDIQTIVTCTGLEEFINNRMNINKIFKVTDGHVVNEN</sequence>
<name>RECF_LACE2</name>
<organism>
    <name type="scientific">Lachnospira eligens (strain ATCC 27750 / DSM 3376 / VPI C15-48 / C15-B4)</name>
    <name type="common">Eubacterium eligens</name>
    <dbReference type="NCBI Taxonomy" id="515620"/>
    <lineage>
        <taxon>Bacteria</taxon>
        <taxon>Bacillati</taxon>
        <taxon>Bacillota</taxon>
        <taxon>Clostridia</taxon>
        <taxon>Lachnospirales</taxon>
        <taxon>Lachnospiraceae</taxon>
        <taxon>Lachnospira</taxon>
    </lineage>
</organism>
<accession>C4Z176</accession>
<reference key="1">
    <citation type="journal article" date="2009" name="Proc. Natl. Acad. Sci. U.S.A.">
        <title>Characterizing a model human gut microbiota composed of members of its two dominant bacterial phyla.</title>
        <authorList>
            <person name="Mahowald M.A."/>
            <person name="Rey F.E."/>
            <person name="Seedorf H."/>
            <person name="Turnbaugh P.J."/>
            <person name="Fulton R.S."/>
            <person name="Wollam A."/>
            <person name="Shah N."/>
            <person name="Wang C."/>
            <person name="Magrini V."/>
            <person name="Wilson R.K."/>
            <person name="Cantarel B.L."/>
            <person name="Coutinho P.M."/>
            <person name="Henrissat B."/>
            <person name="Crock L.W."/>
            <person name="Russell A."/>
            <person name="Verberkmoes N.C."/>
            <person name="Hettich R.L."/>
            <person name="Gordon J.I."/>
        </authorList>
    </citation>
    <scope>NUCLEOTIDE SEQUENCE [LARGE SCALE GENOMIC DNA]</scope>
    <source>
        <strain>ATCC 27750 / DSM 3376 / VPI C15-48 / C15-B4</strain>
    </source>
</reference>
<dbReference type="EMBL" id="CP001104">
    <property type="protein sequence ID" value="ACR71050.1"/>
    <property type="molecule type" value="Genomic_DNA"/>
</dbReference>
<dbReference type="RefSeq" id="WP_012738288.1">
    <property type="nucleotide sequence ID" value="NC_012778.1"/>
</dbReference>
<dbReference type="SMR" id="C4Z176"/>
<dbReference type="STRING" id="515620.EUBELI_00004"/>
<dbReference type="GeneID" id="41354803"/>
<dbReference type="KEGG" id="eel:EUBELI_00004"/>
<dbReference type="eggNOG" id="COG1195">
    <property type="taxonomic scope" value="Bacteria"/>
</dbReference>
<dbReference type="HOGENOM" id="CLU_040267_0_1_9"/>
<dbReference type="Proteomes" id="UP000001476">
    <property type="component" value="Chromosome"/>
</dbReference>
<dbReference type="GO" id="GO:0005737">
    <property type="term" value="C:cytoplasm"/>
    <property type="evidence" value="ECO:0007669"/>
    <property type="project" value="UniProtKB-SubCell"/>
</dbReference>
<dbReference type="GO" id="GO:0005524">
    <property type="term" value="F:ATP binding"/>
    <property type="evidence" value="ECO:0007669"/>
    <property type="project" value="UniProtKB-UniRule"/>
</dbReference>
<dbReference type="GO" id="GO:0016887">
    <property type="term" value="F:ATP hydrolysis activity"/>
    <property type="evidence" value="ECO:0007669"/>
    <property type="project" value="InterPro"/>
</dbReference>
<dbReference type="GO" id="GO:0003697">
    <property type="term" value="F:single-stranded DNA binding"/>
    <property type="evidence" value="ECO:0007669"/>
    <property type="project" value="UniProtKB-UniRule"/>
</dbReference>
<dbReference type="GO" id="GO:0006260">
    <property type="term" value="P:DNA replication"/>
    <property type="evidence" value="ECO:0007669"/>
    <property type="project" value="UniProtKB-UniRule"/>
</dbReference>
<dbReference type="GO" id="GO:0000731">
    <property type="term" value="P:DNA synthesis involved in DNA repair"/>
    <property type="evidence" value="ECO:0007669"/>
    <property type="project" value="TreeGrafter"/>
</dbReference>
<dbReference type="GO" id="GO:0006302">
    <property type="term" value="P:double-strand break repair"/>
    <property type="evidence" value="ECO:0007669"/>
    <property type="project" value="InterPro"/>
</dbReference>
<dbReference type="GO" id="GO:0009432">
    <property type="term" value="P:SOS response"/>
    <property type="evidence" value="ECO:0007669"/>
    <property type="project" value="UniProtKB-UniRule"/>
</dbReference>
<dbReference type="CDD" id="cd03242">
    <property type="entry name" value="ABC_RecF"/>
    <property type="match status" value="1"/>
</dbReference>
<dbReference type="Gene3D" id="3.40.50.300">
    <property type="entry name" value="P-loop containing nucleotide triphosphate hydrolases"/>
    <property type="match status" value="1"/>
</dbReference>
<dbReference type="Gene3D" id="1.20.1050.90">
    <property type="entry name" value="RecF/RecN/SMC, N-terminal domain"/>
    <property type="match status" value="1"/>
</dbReference>
<dbReference type="HAMAP" id="MF_00365">
    <property type="entry name" value="RecF"/>
    <property type="match status" value="1"/>
</dbReference>
<dbReference type="InterPro" id="IPR001238">
    <property type="entry name" value="DNA-binding_RecF"/>
</dbReference>
<dbReference type="InterPro" id="IPR018078">
    <property type="entry name" value="DNA-binding_RecF_CS"/>
</dbReference>
<dbReference type="InterPro" id="IPR027417">
    <property type="entry name" value="P-loop_NTPase"/>
</dbReference>
<dbReference type="InterPro" id="IPR038729">
    <property type="entry name" value="Rad50/SbcC_AAA"/>
</dbReference>
<dbReference type="InterPro" id="IPR042174">
    <property type="entry name" value="RecF_2"/>
</dbReference>
<dbReference type="NCBIfam" id="TIGR00611">
    <property type="entry name" value="recf"/>
    <property type="match status" value="1"/>
</dbReference>
<dbReference type="PANTHER" id="PTHR32182">
    <property type="entry name" value="DNA REPLICATION AND REPAIR PROTEIN RECF"/>
    <property type="match status" value="1"/>
</dbReference>
<dbReference type="PANTHER" id="PTHR32182:SF0">
    <property type="entry name" value="DNA REPLICATION AND REPAIR PROTEIN RECF"/>
    <property type="match status" value="1"/>
</dbReference>
<dbReference type="Pfam" id="PF13476">
    <property type="entry name" value="AAA_23"/>
    <property type="match status" value="1"/>
</dbReference>
<dbReference type="SUPFAM" id="SSF52540">
    <property type="entry name" value="P-loop containing nucleoside triphosphate hydrolases"/>
    <property type="match status" value="1"/>
</dbReference>
<dbReference type="PROSITE" id="PS00618">
    <property type="entry name" value="RECF_2"/>
    <property type="match status" value="1"/>
</dbReference>
<proteinExistence type="inferred from homology"/>
<feature type="chain" id="PRO_1000205482" description="DNA replication and repair protein RecF">
    <location>
        <begin position="1"/>
        <end position="363"/>
    </location>
</feature>
<feature type="binding site" evidence="1">
    <location>
        <begin position="30"/>
        <end position="37"/>
    </location>
    <ligand>
        <name>ATP</name>
        <dbReference type="ChEBI" id="CHEBI:30616"/>
    </ligand>
</feature>
<protein>
    <recommendedName>
        <fullName evidence="1">DNA replication and repair protein RecF</fullName>
    </recommendedName>
</protein>
<gene>
    <name evidence="1" type="primary">recF</name>
    <name type="ordered locus">EUBELI_00004</name>
</gene>